<proteinExistence type="evidence at protein level"/>
<evidence type="ECO:0000250" key="1">
    <source>
        <dbReference type="UniProtKB" id="P49356"/>
    </source>
</evidence>
<evidence type="ECO:0000255" key="2"/>
<evidence type="ECO:0000269" key="3">
    <source>
    </source>
</evidence>
<evidence type="ECO:0000269" key="4">
    <source>
    </source>
</evidence>
<evidence type="ECO:0000269" key="5">
    <source>
    </source>
</evidence>
<evidence type="ECO:0000269" key="6">
    <source>
    </source>
</evidence>
<evidence type="ECO:0000269" key="7">
    <source>
    </source>
</evidence>
<evidence type="ECO:0000269" key="8">
    <source>
    </source>
</evidence>
<evidence type="ECO:0000269" key="9">
    <source>
    </source>
</evidence>
<evidence type="ECO:0000269" key="10">
    <source>
    </source>
</evidence>
<evidence type="ECO:0000269" key="11">
    <source>
    </source>
</evidence>
<evidence type="ECO:0000269" key="12">
    <source>
    </source>
</evidence>
<evidence type="ECO:0000269" key="13">
    <source>
    </source>
</evidence>
<evidence type="ECO:0000269" key="14">
    <source>
    </source>
</evidence>
<evidence type="ECO:0000269" key="15">
    <source>
    </source>
</evidence>
<evidence type="ECO:0000269" key="16">
    <source>
    </source>
</evidence>
<evidence type="ECO:0000269" key="17">
    <source>
    </source>
</evidence>
<evidence type="ECO:0000269" key="18">
    <source>
    </source>
</evidence>
<evidence type="ECO:0000269" key="19">
    <source>
    </source>
</evidence>
<evidence type="ECO:0000269" key="20">
    <source>
    </source>
</evidence>
<evidence type="ECO:0000303" key="21">
    <source>
    </source>
</evidence>
<evidence type="ECO:0000305" key="22"/>
<evidence type="ECO:0000305" key="23">
    <source>
    </source>
</evidence>
<evidence type="ECO:0000305" key="24">
    <source>
    </source>
</evidence>
<feature type="chain" id="PRO_0000119768" description="Protein farnesyltransferase subunit beta">
    <location>
        <begin position="1"/>
        <end position="431"/>
    </location>
</feature>
<feature type="repeat" description="PFTB 1" evidence="2">
    <location>
        <begin position="130"/>
        <end position="171"/>
    </location>
</feature>
<feature type="repeat" description="PFTB 2" evidence="2">
    <location>
        <begin position="182"/>
        <end position="224"/>
    </location>
</feature>
<feature type="repeat" description="PFTB 3" evidence="2">
    <location>
        <begin position="231"/>
        <end position="273"/>
    </location>
</feature>
<feature type="repeat" description="PFTB 4" evidence="2">
    <location>
        <begin position="280"/>
        <end position="322"/>
    </location>
</feature>
<feature type="repeat" description="PFTB 5" evidence="2">
    <location>
        <begin position="332"/>
        <end position="375"/>
    </location>
</feature>
<feature type="binding site" evidence="1">
    <location>
        <begin position="258"/>
        <end position="261"/>
    </location>
    <ligand>
        <name>(2E,6E)-farnesyl diphosphate</name>
        <dbReference type="ChEBI" id="CHEBI:175763"/>
    </ligand>
</feature>
<feature type="binding site" evidence="1">
    <location>
        <begin position="301"/>
        <end position="304"/>
    </location>
    <ligand>
        <name>(2E,6E)-farnesyl diphosphate</name>
        <dbReference type="ChEBI" id="CHEBI:175763"/>
    </ligand>
</feature>
<feature type="binding site" evidence="1 23 24">
    <location>
        <position position="307"/>
    </location>
    <ligand>
        <name>Zn(2+)</name>
        <dbReference type="ChEBI" id="CHEBI:29105"/>
        <note>catalytic</note>
    </ligand>
</feature>
<feature type="binding site" evidence="1 23 24">
    <location>
        <position position="309"/>
    </location>
    <ligand>
        <name>Zn(2+)</name>
        <dbReference type="ChEBI" id="CHEBI:29105"/>
        <note>catalytic</note>
    </ligand>
</feature>
<feature type="binding site" evidence="1">
    <location>
        <begin position="310"/>
        <end position="313"/>
    </location>
    <ligand>
        <name>(2E,6E)-farnesyl diphosphate</name>
        <dbReference type="ChEBI" id="CHEBI:175763"/>
    </ligand>
</feature>
<feature type="binding site" evidence="1 23 24">
    <location>
        <position position="363"/>
    </location>
    <ligand>
        <name>Zn(2+)</name>
        <dbReference type="ChEBI" id="CHEBI:29105"/>
        <note>catalytic</note>
    </ligand>
</feature>
<feature type="site" description="Important for selectivity against geranylgeranyl diphosphate" evidence="1">
    <location>
        <position position="108"/>
    </location>
</feature>
<feature type="mutagenesis site" description="Impairs isoprenyl transferase activity." evidence="20">
    <original>RYKVLQSV</original>
    <variation>HYKFFQRH</variation>
    <location>
        <begin position="57"/>
        <end position="64"/>
    </location>
</feature>
<feature type="mutagenesis site" description="Farnesylates only Ras-CIIS and not Ras-CII(M,L), and it geranylgeranylates all three substrates as well or better than wild type." evidence="20">
    <original>I</original>
    <variation>D</variation>
    <location>
        <position position="74"/>
    </location>
</feature>
<feature type="mutagenesis site" description="Alters protein substrate specificity. Able to farnesylate Ras2 variants with positively charged C-terminal amino acids (CIIR and CIIK)." evidence="19">
    <original>G</original>
    <variation>D</variation>
    <variation>E</variation>
    <location>
        <position position="149"/>
    </location>
</feature>
<feature type="mutagenesis site" description="Alters protein substrate specificity. Able to farnesylate Ras2 variants with a negatively charged C-terminal aspartate (CIID)." evidence="19">
    <original>G</original>
    <variation>R</variation>
    <variation>K</variation>
    <location>
        <position position="149"/>
    </location>
</feature>
<feature type="mutagenesis site" description="Can substitute for PGGT-I beta subunit (CDC43) in vivo. Has increased activity to farnesylate a substrate for PGGT-I. On the other hand, the ability to farnesylate its own substrate is reduced, due to its increased affinity for PGGT-I protein substrates. Increases the kcat/Km value for PGGTase-I substrates about 20-fold." evidence="13 17">
    <original>S</original>
    <variation>D</variation>
    <variation>N</variation>
    <location>
        <position position="159"/>
    </location>
</feature>
<feature type="mutagenesis site" description="Farnesylates Ras-CII(S,M,L) at wild type levels but can no longer geranylgeranylate the RasCII(M,L) substrates." evidence="20">
    <original>GEVDTRG</original>
    <variation>DEDDLRF</variation>
    <location>
        <begin position="206"/>
        <end position="212"/>
    </location>
</feature>
<feature type="mutagenesis site" description="In ram1-1; causes a defect in a-factor production." evidence="11 15">
    <original>D</original>
    <variation>N</variation>
    <location>
        <position position="209"/>
    </location>
</feature>
<feature type="mutagenesis site" description="In ram1-2; abolishes farnesyltransferase activity." evidence="10 15">
    <original>G</original>
    <variation>V</variation>
    <location>
        <position position="259"/>
    </location>
</feature>
<feature type="mutagenesis site" description="Impairs isoprenyl transferase activity." evidence="20">
    <original>G</original>
    <variation>T</variation>
    <location>
        <position position="308"/>
    </location>
</feature>
<feature type="mutagenesis site" description="Impairs isoprenyl transferase activity." evidence="3">
    <original>Y</original>
    <variation>K</variation>
    <location>
        <position position="310"/>
    </location>
</feature>
<feature type="mutagenesis site" description="Farnesylates Ras-CIIS and Ras-CIIM but not Ras-CIIL, and is not capable of geranylgeranylating the Ras-CII(M,L) substrates." evidence="20">
    <original>LRDK</original>
    <variation>FSKN</variation>
    <location>
        <begin position="351"/>
        <end position="354"/>
    </location>
</feature>
<feature type="mutagenesis site" description="Can substitute for PGGT-I beta subunit, by modulating the substrate specificity for the peptide substrate." evidence="17">
    <original>Y</original>
    <variation>H</variation>
    <location>
        <position position="362"/>
    </location>
</feature>
<feature type="mutagenesis site" description="Can substitute for PGGT-I beta subunit, by modulating the substrate specificity for the peptide substrate. Increases the kcat/Km value for PGGTase-I substrates about 20-fold." evidence="17">
    <original>Y</original>
    <variation>L</variation>
    <variation>M</variation>
    <variation>I</variation>
    <location>
        <position position="362"/>
    </location>
</feature>
<feature type="mutagenesis site" description="Can substitute for PGGT-I beta subunit, by modulating the substrate specificity for the peptide substrate." evidence="17">
    <original>Y</original>
    <variation>N</variation>
    <location>
        <position position="366"/>
    </location>
</feature>
<feature type="sequence conflict" description="In Ref. 5; AAT92990." evidence="22" ref="5">
    <original>K</original>
    <variation>R</variation>
    <location>
        <position position="47"/>
    </location>
</feature>
<sequence>MRQRVGRSIARAKFINTALLGRKRPVMERVVDIAHVDSSKAIQPLMKELETDTTEARYKVLQSVLEIYDDEKNIEPALTKEFHKMYLDVAFEISLPPQMTALDASQPWMLYWIANSLKVMDRDWLSDDTKRKIVDKLFTISPSGGPFGGGPGQLSHLASTYAAINALSLCDNIDGCWDRIDRKGIYQWLISLKEPNGGFKTCLEVGEVDTRGIYCALSIATLLNILTEELTEGVLNYLKNCQNYEGGFGSCPHVDEAHGGYTFCATASLAILRSMDQINVEKLLEWSSARQLQEERGFCGRSNKLVDGCYSFWVGGSAAILEAFGYGQCFNKHALRDYILYCCQEKEQPGLRDKPGAHSDFYHTNYCLLGLAVAESSYSCTPNDSPHNIKCTPDRLIGSSKLTDVNPVYGLPIENVRKIIHYFKSNLSSPS</sequence>
<protein>
    <recommendedName>
        <fullName>Protein farnesyltransferase subunit beta</fullName>
        <shortName>FTase-beta</shortName>
        <shortName>PFTase beta</shortName>
        <ecNumber evidence="8 14">2.5.1.58</ecNumber>
    </recommendedName>
    <alternativeName>
        <fullName>CAAX farnesyltransferase subunit beta</fullName>
    </alternativeName>
    <alternativeName>
        <fullName>Ras proteins prenyltransferase subunit beta</fullName>
    </alternativeName>
</protein>
<comment type="function">
    <text evidence="5 8 9 10 11 12 13 14 16 17 19 20">Catalyzes the transfer of a farnesyl moiety from farnesyl diphosphate to a cysteine at the fourth position from the C-terminus of several proteins having the C-terminal sequence Cys-aliphatic-aliphatic-X where X is Ser, Ala, Met, Cys, or Gln. Required for the membrane localization of proteins such as a-factor, Ras proteins and other membrane proteins containing the C-terminal CAAX motif (PubMed:17142567, PubMed:1763050, PubMed:1860864, PubMed:2124698, PubMed:3533274, PubMed:8424764, PubMed:8527442). The beta subunit is responsible for isoprenoid and peptide-binding (PubMed:12667062, PubMed:7878044, PubMed:8995312, PubMed:9380709, PubMed:9545274).</text>
</comment>
<comment type="catalytic activity">
    <reaction evidence="8 14 16 18">
        <text>L-cysteinyl-[protein] + (2E,6E)-farnesyl diphosphate = S-(2E,6E)-farnesyl-L-cysteinyl-[protein] + diphosphate</text>
        <dbReference type="Rhea" id="RHEA:13345"/>
        <dbReference type="Rhea" id="RHEA-COMP:10131"/>
        <dbReference type="Rhea" id="RHEA-COMP:11535"/>
        <dbReference type="ChEBI" id="CHEBI:29950"/>
        <dbReference type="ChEBI" id="CHEBI:33019"/>
        <dbReference type="ChEBI" id="CHEBI:86019"/>
        <dbReference type="ChEBI" id="CHEBI:175763"/>
        <dbReference type="EC" id="2.5.1.58"/>
    </reaction>
    <physiologicalReaction direction="left-to-right" evidence="8 14 16 18">
        <dbReference type="Rhea" id="RHEA:13346"/>
    </physiologicalReaction>
</comment>
<comment type="cofactor">
    <cofactor evidence="3 4">
        <name>Zn(2+)</name>
        <dbReference type="ChEBI" id="CHEBI:29105"/>
    </cofactor>
    <text evidence="4">Binds 1 zinc ion per subunit.</text>
</comment>
<comment type="biophysicochemical properties">
    <kinetics>
        <KM evidence="14">8.1 uM for farnesyl diphosphate</KM>
        <KM evidence="20">0.16 uM for farnesyl diphosphate</KM>
        <KM evidence="16">0.9 uM for dansyl-GCVIA</KM>
        <KM evidence="20">3.59 uM for geranylgeranyl diphosphate</KM>
        <KM evidence="20">0.46 uM for Ras-CIIS</KM>
        <KM evidence="20">4.12 uM for Ras-CIIM (for farnesyl transferase reaction)</KM>
        <KM evidence="20">0.28 uM for Ras-CIIM (for geranyl-geranyl transferase reaction)</KM>
        <KM evidence="20">10.2 uM for Ras-CIIL</KM>
        <Vmax evidence="16">3.4 umol/min/mg enzyme</Vmax>
        <text evidence="16">kcat is 4.5 sec(-1) with dansyl-GCVIA as substrate.</text>
    </kinetics>
    <phDependence>
        <text evidence="14">Optimum pH is 7.8.</text>
    </phDependence>
</comment>
<comment type="subunit">
    <text evidence="9 14">Heterodimer of an alpha (RAM2) and a beta (RAM1) subunit.</text>
</comment>
<comment type="interaction">
    <interactant intactId="EBI-14806">
        <id>P22007</id>
    </interactant>
    <interactant intactId="EBI-14814">
        <id>P29703</id>
        <label>RAM2</label>
    </interactant>
    <organismsDiffer>false</organismsDiffer>
    <experiments>4</experiments>
</comment>
<comment type="subcellular location">
    <subcellularLocation>
        <location evidence="6">Cytoplasm</location>
    </subcellularLocation>
</comment>
<comment type="disruption phenotype">
    <text evidence="8">Decreases SKT5 farnesylation.</text>
</comment>
<comment type="miscellaneous">
    <text evidence="7">Present with 3910 molecules/cell in log phase SD medium.</text>
</comment>
<comment type="similarity">
    <text evidence="22">Belongs to the protein prenyltransferase subunit beta family.</text>
</comment>
<organism>
    <name type="scientific">Saccharomyces cerevisiae (strain ATCC 204508 / S288c)</name>
    <name type="common">Baker's yeast</name>
    <dbReference type="NCBI Taxonomy" id="559292"/>
    <lineage>
        <taxon>Eukaryota</taxon>
        <taxon>Fungi</taxon>
        <taxon>Dikarya</taxon>
        <taxon>Ascomycota</taxon>
        <taxon>Saccharomycotina</taxon>
        <taxon>Saccharomycetes</taxon>
        <taxon>Saccharomycetales</taxon>
        <taxon>Saccharomycetaceae</taxon>
        <taxon>Saccharomyces</taxon>
    </lineage>
</organism>
<accession>P22007</accession>
<accession>D6VRQ8</accession>
<accession>E9P902</accession>
<accession>Q12422</accession>
<name>FNTB_YEAST</name>
<gene>
    <name evidence="21" type="primary">RAM1</name>
    <name type="synonym">DPR1</name>
    <name type="synonym">SCG2</name>
    <name type="synonym">STE16</name>
    <name type="ordered locus">YDL090C</name>
    <name type="ORF">D2412</name>
</gene>
<keyword id="KW-0963">Cytoplasm</keyword>
<keyword id="KW-0479">Metal-binding</keyword>
<keyword id="KW-0637">Prenyltransferase</keyword>
<keyword id="KW-1185">Reference proteome</keyword>
<keyword id="KW-0677">Repeat</keyword>
<keyword id="KW-0808">Transferase</keyword>
<keyword id="KW-0862">Zinc</keyword>
<reference key="1">
    <citation type="journal article" date="1988" name="Yeast">
        <title>Structure and expression of yeast DPR1, a gene essential for the processing and intracellular localization of ras proteins.</title>
        <authorList>
            <person name="Goodman L.E."/>
            <person name="Perou C.M."/>
            <person name="Fujiyama A."/>
            <person name="Tamanoi F."/>
        </authorList>
    </citation>
    <scope>NUCLEOTIDE SEQUENCE [GENOMIC DNA]</scope>
</reference>
<reference key="2">
    <citation type="journal article" date="1996" name="Yeast">
        <title>The sequence of a 16,691 bp segment of Saccharomyces cerevisiae chromosome IV identifies the DUN1, PMT1, PMT5, SRP14 and DPR1 genes, and five new open reading frames.</title>
        <authorList>
            <person name="Boskovic J."/>
            <person name="Soler-Mira A."/>
            <person name="Garcia-Cantalejo J.M."/>
            <person name="Ballesta J.P.G."/>
            <person name="Jimenez A."/>
            <person name="Remacha M.A."/>
        </authorList>
    </citation>
    <scope>NUCLEOTIDE SEQUENCE [GENOMIC DNA]</scope>
    <source>
        <strain>ATCC 96604 / S288c / FY1679</strain>
    </source>
</reference>
<reference key="3">
    <citation type="journal article" date="1997" name="Nature">
        <title>The nucleotide sequence of Saccharomyces cerevisiae chromosome IV.</title>
        <authorList>
            <person name="Jacq C."/>
            <person name="Alt-Moerbe J."/>
            <person name="Andre B."/>
            <person name="Arnold W."/>
            <person name="Bahr A."/>
            <person name="Ballesta J.P.G."/>
            <person name="Bargues M."/>
            <person name="Baron L."/>
            <person name="Becker A."/>
            <person name="Biteau N."/>
            <person name="Bloecker H."/>
            <person name="Blugeon C."/>
            <person name="Boskovic J."/>
            <person name="Brandt P."/>
            <person name="Brueckner M."/>
            <person name="Buitrago M.J."/>
            <person name="Coster F."/>
            <person name="Delaveau T."/>
            <person name="del Rey F."/>
            <person name="Dujon B."/>
            <person name="Eide L.G."/>
            <person name="Garcia-Cantalejo J.M."/>
            <person name="Goffeau A."/>
            <person name="Gomez-Peris A."/>
            <person name="Granotier C."/>
            <person name="Hanemann V."/>
            <person name="Hankeln T."/>
            <person name="Hoheisel J.D."/>
            <person name="Jaeger W."/>
            <person name="Jimenez A."/>
            <person name="Jonniaux J.-L."/>
            <person name="Kraemer C."/>
            <person name="Kuester H."/>
            <person name="Laamanen P."/>
            <person name="Legros Y."/>
            <person name="Louis E.J."/>
            <person name="Moeller-Rieker S."/>
            <person name="Monnet A."/>
            <person name="Moro M."/>
            <person name="Mueller-Auer S."/>
            <person name="Nussbaumer B."/>
            <person name="Paricio N."/>
            <person name="Paulin L."/>
            <person name="Perea J."/>
            <person name="Perez-Alonso M."/>
            <person name="Perez-Ortin J.E."/>
            <person name="Pohl T.M."/>
            <person name="Prydz H."/>
            <person name="Purnelle B."/>
            <person name="Rasmussen S.W."/>
            <person name="Remacha M.A."/>
            <person name="Revuelta J.L."/>
            <person name="Rieger M."/>
            <person name="Salom D."/>
            <person name="Saluz H.P."/>
            <person name="Saiz J.E."/>
            <person name="Saren A.-M."/>
            <person name="Schaefer M."/>
            <person name="Scharfe M."/>
            <person name="Schmidt E.R."/>
            <person name="Schneider C."/>
            <person name="Scholler P."/>
            <person name="Schwarz S."/>
            <person name="Soler-Mira A."/>
            <person name="Urrestarazu L.A."/>
            <person name="Verhasselt P."/>
            <person name="Vissers S."/>
            <person name="Voet M."/>
            <person name="Volckaert G."/>
            <person name="Wagner G."/>
            <person name="Wambutt R."/>
            <person name="Wedler E."/>
            <person name="Wedler H."/>
            <person name="Woelfl S."/>
            <person name="Harris D.E."/>
            <person name="Bowman S."/>
            <person name="Brown D."/>
            <person name="Churcher C.M."/>
            <person name="Connor R."/>
            <person name="Dedman K."/>
            <person name="Gentles S."/>
            <person name="Hamlin N."/>
            <person name="Hunt S."/>
            <person name="Jones L."/>
            <person name="McDonald S."/>
            <person name="Murphy L.D."/>
            <person name="Niblett D."/>
            <person name="Odell C."/>
            <person name="Oliver K."/>
            <person name="Rajandream M.A."/>
            <person name="Richards C."/>
            <person name="Shore L."/>
            <person name="Walsh S.V."/>
            <person name="Barrell B.G."/>
            <person name="Dietrich F.S."/>
            <person name="Mulligan J.T."/>
            <person name="Allen E."/>
            <person name="Araujo R."/>
            <person name="Aviles E."/>
            <person name="Berno A."/>
            <person name="Carpenter J."/>
            <person name="Chen E."/>
            <person name="Cherry J.M."/>
            <person name="Chung E."/>
            <person name="Duncan M."/>
            <person name="Hunicke-Smith S."/>
            <person name="Hyman R.W."/>
            <person name="Komp C."/>
            <person name="Lashkari D."/>
            <person name="Lew H."/>
            <person name="Lin D."/>
            <person name="Mosedale D."/>
            <person name="Nakahara K."/>
            <person name="Namath A."/>
            <person name="Oefner P."/>
            <person name="Oh C."/>
            <person name="Petel F.X."/>
            <person name="Roberts D."/>
            <person name="Schramm S."/>
            <person name="Schroeder M."/>
            <person name="Shogren T."/>
            <person name="Shroff N."/>
            <person name="Winant A."/>
            <person name="Yelton M.A."/>
            <person name="Botstein D."/>
            <person name="Davis R.W."/>
            <person name="Johnston M."/>
            <person name="Andrews S."/>
            <person name="Brinkman R."/>
            <person name="Cooper J."/>
            <person name="Ding H."/>
            <person name="Du Z."/>
            <person name="Favello A."/>
            <person name="Fulton L."/>
            <person name="Gattung S."/>
            <person name="Greco T."/>
            <person name="Hallsworth K."/>
            <person name="Hawkins J."/>
            <person name="Hillier L.W."/>
            <person name="Jier M."/>
            <person name="Johnson D."/>
            <person name="Johnston L."/>
            <person name="Kirsten J."/>
            <person name="Kucaba T."/>
            <person name="Langston Y."/>
            <person name="Latreille P."/>
            <person name="Le T."/>
            <person name="Mardis E."/>
            <person name="Menezes S."/>
            <person name="Miller N."/>
            <person name="Nhan M."/>
            <person name="Pauley A."/>
            <person name="Peluso D."/>
            <person name="Rifkin L."/>
            <person name="Riles L."/>
            <person name="Taich A."/>
            <person name="Trevaskis E."/>
            <person name="Vignati D."/>
            <person name="Wilcox L."/>
            <person name="Wohldman P."/>
            <person name="Vaudin M."/>
            <person name="Wilson R."/>
            <person name="Waterston R."/>
            <person name="Albermann K."/>
            <person name="Hani J."/>
            <person name="Heumann K."/>
            <person name="Kleine K."/>
            <person name="Mewes H.-W."/>
            <person name="Zollner A."/>
            <person name="Zaccaria P."/>
        </authorList>
    </citation>
    <scope>NUCLEOTIDE SEQUENCE [LARGE SCALE GENOMIC DNA]</scope>
    <source>
        <strain>ATCC 204508 / S288c</strain>
    </source>
</reference>
<reference key="4">
    <citation type="journal article" date="2014" name="G3 (Bethesda)">
        <title>The reference genome sequence of Saccharomyces cerevisiae: Then and now.</title>
        <authorList>
            <person name="Engel S.R."/>
            <person name="Dietrich F.S."/>
            <person name="Fisk D.G."/>
            <person name="Binkley G."/>
            <person name="Balakrishnan R."/>
            <person name="Costanzo M.C."/>
            <person name="Dwight S.S."/>
            <person name="Hitz B.C."/>
            <person name="Karra K."/>
            <person name="Nash R.S."/>
            <person name="Weng S."/>
            <person name="Wong E.D."/>
            <person name="Lloyd P."/>
            <person name="Skrzypek M.S."/>
            <person name="Miyasato S.R."/>
            <person name="Simison M."/>
            <person name="Cherry J.M."/>
        </authorList>
    </citation>
    <scope>GENOME REANNOTATION</scope>
    <source>
        <strain>ATCC 204508 / S288c</strain>
    </source>
</reference>
<reference key="5">
    <citation type="journal article" date="2007" name="Genome Res.">
        <title>Approaching a complete repository of sequence-verified protein-encoding clones for Saccharomyces cerevisiae.</title>
        <authorList>
            <person name="Hu Y."/>
            <person name="Rolfs A."/>
            <person name="Bhullar B."/>
            <person name="Murthy T.V.S."/>
            <person name="Zhu C."/>
            <person name="Berger M.F."/>
            <person name="Camargo A.A."/>
            <person name="Kelley F."/>
            <person name="McCarron S."/>
            <person name="Jepson D."/>
            <person name="Richardson A."/>
            <person name="Raphael J."/>
            <person name="Moreira D."/>
            <person name="Taycher E."/>
            <person name="Zuo D."/>
            <person name="Mohr S."/>
            <person name="Kane M.F."/>
            <person name="Williamson J."/>
            <person name="Simpson A.J.G."/>
            <person name="Bulyk M.L."/>
            <person name="Harlow E."/>
            <person name="Marsischky G."/>
            <person name="Kolodner R.D."/>
            <person name="LaBaer J."/>
        </authorList>
    </citation>
    <scope>NUCLEOTIDE SEQUENCE [GENOMIC DNA]</scope>
    <source>
        <strain>ATCC 204508 / S288c</strain>
    </source>
</reference>
<reference key="6">
    <citation type="journal article" date="1986" name="Cell">
        <title>RAM, a gene of yeast required for a functional modification of RAS proteins and for production of mating pheromone a-factor.</title>
        <authorList>
            <person name="Powers S."/>
            <person name="Michaelis S."/>
            <person name="Broek D."/>
            <person name="Santa Anna S."/>
            <person name="Field J."/>
            <person name="Herskowitz I."/>
            <person name="Wigler M."/>
        </authorList>
    </citation>
    <scope>FUNCTION</scope>
    <scope>MUTAGENESIS OF ASP-209</scope>
</reference>
<reference key="7">
    <citation type="journal article" date="1990" name="Proc. Natl. Acad. Sci. U.S.A.">
        <title>Mutants of Saccharomyces cerevisiae defective in the farnesylation of Ras proteins.</title>
        <authorList>
            <person name="Goodman L.E."/>
            <person name="Judd S.R."/>
            <person name="Farnsworth C.C."/>
            <person name="Powers S."/>
            <person name="Gelb M.H."/>
            <person name="Glomset J.A."/>
            <person name="Tamanoi F."/>
        </authorList>
    </citation>
    <scope>FUNCTION</scope>
    <scope>MUTAGENESIS OF GLY-259</scope>
</reference>
<reference key="8">
    <citation type="journal article" date="1991" name="J. Biol. Chem.">
        <title>Sequence dependence of protein isoprenylation.</title>
        <authorList>
            <person name="Moores S.L."/>
            <person name="Schaber M.D."/>
            <person name="Mosser S.D."/>
            <person name="Rands E."/>
            <person name="O'Hara M.B."/>
            <person name="Garsky V.M."/>
            <person name="Marshall M.S."/>
            <person name="Pompliano D.L."/>
            <person name="Gibbs J.B."/>
        </authorList>
    </citation>
    <scope>FUNCTION</scope>
</reference>
<reference key="9">
    <citation type="journal article" date="1991" name="Proc. Natl. Acad. Sci. U.S.A.">
        <title>RAM2, an essential gene of yeast, and RAM1 encode the two polypeptide components of the farnesyltransferase that prenylates a-factor and Ras proteins.</title>
        <authorList>
            <person name="He B."/>
            <person name="Chen P."/>
            <person name="Chen S.-Y."/>
            <person name="Vancura K.L."/>
            <person name="Michaelis S."/>
            <person name="Powers S."/>
        </authorList>
    </citation>
    <scope>FUNCTION</scope>
    <scope>SUBUNIT</scope>
</reference>
<reference key="10">
    <citation type="journal article" date="1993" name="Biochemistry">
        <title>Characterization of recombinant human farnesyl-protein transferase: cloning, expression, farnesyl diphosphate binding, and functional homology with yeast prenyl-protein transferases.</title>
        <authorList>
            <person name="Omer C.A."/>
            <person name="Kral A.M."/>
            <person name="Diehl R.E."/>
            <person name="Prendergast G.C."/>
            <person name="Powers S."/>
            <person name="Allen C.M."/>
            <person name="Gibbs J.B."/>
            <person name="Kohl N.E."/>
        </authorList>
    </citation>
    <scope>MUTAGENESIS OF ASP-209 AND GLY-259</scope>
</reference>
<reference key="11">
    <citation type="journal article" date="1993" name="Biochem. J.">
        <title>Purified yeast protein farnesyltransferase is structurally and functionally similar to its mammalian counterpart.</title>
        <authorList>
            <person name="Gomez R."/>
            <person name="Goodman L.E."/>
            <person name="Tripathy S.K."/>
            <person name="O'Rourke E."/>
            <person name="Manne V."/>
            <person name="Tamanoi F."/>
        </authorList>
    </citation>
    <scope>FUNCTION</scope>
    <scope>CATALYTIC ACTIVITY</scope>
    <scope>SUBUNIT</scope>
    <scope>BIOPHYSICOCHEMICAL PROPERTIES</scope>
</reference>
<reference key="12">
    <citation type="journal article" date="1995" name="Biochemistry">
        <title>Yeast protein farnesyltransferase: steady-state kinetic studies of substrate binding.</title>
        <authorList>
            <person name="Dolence J.M."/>
            <person name="Cassidy P.B."/>
            <person name="Mathis J.R."/>
            <person name="Poulter C.D."/>
        </authorList>
    </citation>
    <scope>FUNCTION</scope>
    <scope>CATALYTIC ACTIVITY</scope>
</reference>
<reference key="13">
    <citation type="journal article" date="1995" name="Methods Enzymol.">
        <title>Continuous fluorescence assay for protein prenyltransferases.</title>
        <authorList>
            <person name="Cassidy P.B."/>
            <person name="Dolence J.M."/>
            <person name="Poulter C.D."/>
        </authorList>
    </citation>
    <scope>CATALYTIC ACTIVITY</scope>
    <scope>BIOPHYSICOCHEMICAL PROPERTIES</scope>
</reference>
<reference key="14">
    <citation type="journal article" date="1995" name="Proc. Natl. Acad. Sci. U.S.A.">
        <title>Mutant farnesyltransferase beta subunit of Saccharomyces cerevisiae that can substitute for geranylgeranyltransferase type I beta subunit.</title>
        <authorList>
            <person name="Mitsuzawa H."/>
            <person name="Esson K."/>
            <person name="Tamanoi F."/>
        </authorList>
    </citation>
    <scope>FUNCTION</scope>
    <scope>MUTAGENESIS OF SER-159</scope>
</reference>
<reference key="15">
    <citation type="journal article" date="1997" name="Biochemistry">
        <title>Yeast protein farnesyltransferase: a pre-steady-state kinetic analysis.</title>
        <authorList>
            <person name="Mathis J.R."/>
            <person name="Poulter C.D."/>
        </authorList>
    </citation>
    <scope>CATALYTIC ACTIVITY</scope>
    <scope>BIOPHYSICOCHEMICAL PROPERTIES</scope>
</reference>
<reference key="16">
    <citation type="journal article" date="1997" name="J. Biol. Chem.">
        <title>Amino acid substitutions that convert the protein substrate specificity of farnesyltransferase to that of geranylgeranyltransferase type I.</title>
        <authorList>
            <person name="Del Villar K."/>
            <person name="Mitsuzawa H."/>
            <person name="Yang W."/>
            <person name="Sattler I."/>
            <person name="Tamanoi F."/>
        </authorList>
    </citation>
    <scope>MUTAGENESIS OF SER-159; TYR-362 AND TYR-366</scope>
</reference>
<reference key="17">
    <citation type="journal article" date="1997" name="Proc. Natl. Acad. Sci. U.S.A.">
        <title>Substrate specificity determinants in the farnesyltransferase beta-subunit.</title>
        <authorList>
            <person name="Trueblood C.E."/>
            <person name="Boyartchuk V.L."/>
            <person name="Rine J."/>
        </authorList>
    </citation>
    <scope>MUTAGENESIS OF GLY-149</scope>
</reference>
<reference key="18">
    <citation type="journal article" date="1998" name="J. Biol. Chem.">
        <title>Amino acid residues that define both the isoprenoid and CAAX preferences of the Saccharomyces cerevisiae protein farnesyltransferase. Creating the perfect farnesyltransferase.</title>
        <authorList>
            <person name="Caplin B.E."/>
            <person name="Ohya Y."/>
            <person name="Marshall M.S."/>
        </authorList>
    </citation>
    <scope>CATALYTIC ACTIVITY</scope>
    <scope>BIOPHYSICOCHEMICAL PROPERTIES</scope>
    <scope>MUTAGENESIS OF 57-ARG--VAL-64; ILE-74; 206-GLY--GLY-212; GLY-308 AND 351-LEU--LYS-354</scope>
</reference>
<reference key="19">
    <citation type="journal article" date="1999" name="Biochemistry">
        <title>Yeast protein farnesyltransferase. pKas of peptide substrates bound as zinc thiolates.</title>
        <authorList>
            <person name="Rozema D.B."/>
            <person name="Poulter C.D."/>
        </authorList>
    </citation>
    <scope>COFACTOR</scope>
    <scope>MUTAGENESIS OF TYR-310</scope>
</reference>
<reference key="20">
    <citation type="journal article" date="2002" name="Biochemistry">
        <title>Modulation of the zinc(II) center in protein farnesyltransferase by mutagenesis of the zinc(II) ligands.</title>
        <authorList>
            <person name="Harris C.M."/>
            <person name="Derdowski A.M."/>
            <person name="Poulter C.D."/>
        </authorList>
    </citation>
    <scope>REACTION MECHANISM</scope>
    <scope>COFACTOR</scope>
</reference>
<reference key="21">
    <citation type="journal article" date="2003" name="Biochemistry">
        <title>Biochemical and structural studies with prenyl diphosphate analogues provide insights into isoprenoid recognition by protein farnesyl transferase.</title>
        <authorList>
            <person name="Turek-Etienne T.C."/>
            <person name="Strickland C.L."/>
            <person name="Distefano M.D."/>
        </authorList>
    </citation>
    <scope>SUBSTRATE SPECIFICITY</scope>
</reference>
<reference key="22">
    <citation type="journal article" date="2003" name="Nature">
        <title>Global analysis of protein localization in budding yeast.</title>
        <authorList>
            <person name="Huh W.-K."/>
            <person name="Falvo J.V."/>
            <person name="Gerke L.C."/>
            <person name="Carroll A.S."/>
            <person name="Howson R.W."/>
            <person name="Weissman J.S."/>
            <person name="O'Shea E.K."/>
        </authorList>
    </citation>
    <scope>SUBCELLULAR LOCATION [LARGE SCALE ANALYSIS]</scope>
</reference>
<reference key="23">
    <citation type="journal article" date="2003" name="Nature">
        <title>Global analysis of protein expression in yeast.</title>
        <authorList>
            <person name="Ghaemmaghami S."/>
            <person name="Huh W.-K."/>
            <person name="Bower K."/>
            <person name="Howson R.W."/>
            <person name="Belle A."/>
            <person name="Dephoure N."/>
            <person name="O'Shea E.K."/>
            <person name="Weissman J.S."/>
        </authorList>
    </citation>
    <scope>LEVEL OF PROTEIN EXPRESSION [LARGE SCALE ANALYSIS]</scope>
</reference>
<reference key="24">
    <citation type="journal article" date="2007" name="Eukaryot. Cell">
        <title>Prenylation of Saccharomyces cerevisiae Chs4p Affects Chitin Synthase III activity and chitin chain length.</title>
        <authorList>
            <person name="Grabinska K.A."/>
            <person name="Magnelli P."/>
            <person name="Robbins P.W."/>
        </authorList>
    </citation>
    <scope>FUNCTION</scope>
    <scope>CATALYTIC ACTIVITY</scope>
    <scope>DISRUPTION PHENOTYPE</scope>
</reference>
<reference key="25">
    <citation type="journal article" date="2008" name="Mol. Cell. Proteomics">
        <title>A multidimensional chromatography technology for in-depth phosphoproteome analysis.</title>
        <authorList>
            <person name="Albuquerque C.P."/>
            <person name="Smolka M.B."/>
            <person name="Payne S.H."/>
            <person name="Bafna V."/>
            <person name="Eng J."/>
            <person name="Zhou H."/>
        </authorList>
    </citation>
    <scope>IDENTIFICATION BY MASS SPECTROMETRY [LARGE SCALE ANALYSIS]</scope>
</reference>
<dbReference type="EC" id="2.5.1.58" evidence="8 14"/>
<dbReference type="EMBL" id="M22753">
    <property type="protein sequence ID" value="AAA34579.1"/>
    <property type="molecule type" value="Genomic_DNA"/>
</dbReference>
<dbReference type="EMBL" id="X95644">
    <property type="protein sequence ID" value="CAA64921.1"/>
    <property type="molecule type" value="Genomic_DNA"/>
</dbReference>
<dbReference type="EMBL" id="Z74138">
    <property type="protein sequence ID" value="CAA98656.1"/>
    <property type="molecule type" value="Genomic_DNA"/>
</dbReference>
<dbReference type="EMBL" id="AY692971">
    <property type="protein sequence ID" value="AAT92990.1"/>
    <property type="molecule type" value="Genomic_DNA"/>
</dbReference>
<dbReference type="EMBL" id="BK006938">
    <property type="protein sequence ID" value="DAA11768.1"/>
    <property type="molecule type" value="Genomic_DNA"/>
</dbReference>
<dbReference type="PIR" id="S67626">
    <property type="entry name" value="BVBYDP"/>
</dbReference>
<dbReference type="RefSeq" id="NP_010193.1">
    <property type="nucleotide sequence ID" value="NM_001180149.1"/>
</dbReference>
<dbReference type="SMR" id="P22007"/>
<dbReference type="BioGRID" id="31970">
    <property type="interactions" value="248"/>
</dbReference>
<dbReference type="ComplexPortal" id="CPX-1634">
    <property type="entry name" value="Protein farnesyltransferase complex"/>
</dbReference>
<dbReference type="DIP" id="DIP-1556N"/>
<dbReference type="FunCoup" id="P22007">
    <property type="interactions" value="841"/>
</dbReference>
<dbReference type="IntAct" id="P22007">
    <property type="interactions" value="11"/>
</dbReference>
<dbReference type="MINT" id="P22007"/>
<dbReference type="STRING" id="4932.YDL090C"/>
<dbReference type="BindingDB" id="P22007"/>
<dbReference type="ChEMBL" id="CHEMBL2111393"/>
<dbReference type="iPTMnet" id="P22007"/>
<dbReference type="PaxDb" id="4932-YDL090C"/>
<dbReference type="PeptideAtlas" id="P22007"/>
<dbReference type="EnsemblFungi" id="YDL090C_mRNA">
    <property type="protein sequence ID" value="YDL090C"/>
    <property type="gene ID" value="YDL090C"/>
</dbReference>
<dbReference type="GeneID" id="851468"/>
<dbReference type="KEGG" id="sce:YDL090C"/>
<dbReference type="AGR" id="SGD:S000002248"/>
<dbReference type="SGD" id="S000002248">
    <property type="gene designation" value="RAM1"/>
</dbReference>
<dbReference type="VEuPathDB" id="FungiDB:YDL090C"/>
<dbReference type="eggNOG" id="KOG0365">
    <property type="taxonomic scope" value="Eukaryota"/>
</dbReference>
<dbReference type="GeneTree" id="ENSGT00950000183128"/>
<dbReference type="HOGENOM" id="CLU_028946_0_2_1"/>
<dbReference type="InParanoid" id="P22007"/>
<dbReference type="OMA" id="MLYWIAN"/>
<dbReference type="OrthoDB" id="10261146at2759"/>
<dbReference type="BioCyc" id="YEAST:MONOMER3O-269"/>
<dbReference type="BRENDA" id="2.5.1.58">
    <property type="organism ID" value="984"/>
</dbReference>
<dbReference type="Reactome" id="R-SCE-9648002">
    <property type="pathway name" value="RAS processing"/>
</dbReference>
<dbReference type="BioGRID-ORCS" id="851468">
    <property type="hits" value="0 hits in 10 CRISPR screens"/>
</dbReference>
<dbReference type="PRO" id="PR:P22007"/>
<dbReference type="Proteomes" id="UP000002311">
    <property type="component" value="Chromosome IV"/>
</dbReference>
<dbReference type="RNAct" id="P22007">
    <property type="molecule type" value="protein"/>
</dbReference>
<dbReference type="GO" id="GO:0005965">
    <property type="term" value="C:protein farnesyltransferase complex"/>
    <property type="evidence" value="ECO:0000314"/>
    <property type="project" value="SGD"/>
</dbReference>
<dbReference type="GO" id="GO:0004660">
    <property type="term" value="F:protein farnesyltransferase activity"/>
    <property type="evidence" value="ECO:0000314"/>
    <property type="project" value="SGD"/>
</dbReference>
<dbReference type="GO" id="GO:0008270">
    <property type="term" value="F:zinc ion binding"/>
    <property type="evidence" value="ECO:0000250"/>
    <property type="project" value="UniProtKB"/>
</dbReference>
<dbReference type="GO" id="GO:0018343">
    <property type="term" value="P:protein farnesylation"/>
    <property type="evidence" value="ECO:0000314"/>
    <property type="project" value="UniProtKB"/>
</dbReference>
<dbReference type="CDD" id="cd02893">
    <property type="entry name" value="FTase"/>
    <property type="match status" value="1"/>
</dbReference>
<dbReference type="FunFam" id="1.50.10.20:FF:000036">
    <property type="entry name" value="Protein farnesyltransferase subunit beta"/>
    <property type="match status" value="1"/>
</dbReference>
<dbReference type="Gene3D" id="1.50.10.20">
    <property type="match status" value="1"/>
</dbReference>
<dbReference type="InterPro" id="IPR026872">
    <property type="entry name" value="FTB"/>
</dbReference>
<dbReference type="InterPro" id="IPR045089">
    <property type="entry name" value="PGGT1B-like"/>
</dbReference>
<dbReference type="InterPro" id="IPR001330">
    <property type="entry name" value="Prenyltrans"/>
</dbReference>
<dbReference type="InterPro" id="IPR008930">
    <property type="entry name" value="Terpenoid_cyclase/PrenylTrfase"/>
</dbReference>
<dbReference type="PANTHER" id="PTHR11774">
    <property type="entry name" value="GERANYLGERANYL TRANSFERASE TYPE BETA SUBUNIT"/>
    <property type="match status" value="1"/>
</dbReference>
<dbReference type="PANTHER" id="PTHR11774:SF6">
    <property type="entry name" value="PROTEIN FARNESYLTRANSFERASE SUBUNIT BETA"/>
    <property type="match status" value="1"/>
</dbReference>
<dbReference type="Pfam" id="PF00432">
    <property type="entry name" value="Prenyltrans"/>
    <property type="match status" value="1"/>
</dbReference>
<dbReference type="SUPFAM" id="SSF48239">
    <property type="entry name" value="Terpenoid cyclases/Protein prenyltransferases"/>
    <property type="match status" value="1"/>
</dbReference>